<comment type="catalytic activity">
    <reaction evidence="1">
        <text>beta-D-fructose 1,6-bisphosphate + H2O = beta-D-fructose 6-phosphate + phosphate</text>
        <dbReference type="Rhea" id="RHEA:11064"/>
        <dbReference type="ChEBI" id="CHEBI:15377"/>
        <dbReference type="ChEBI" id="CHEBI:32966"/>
        <dbReference type="ChEBI" id="CHEBI:43474"/>
        <dbReference type="ChEBI" id="CHEBI:57634"/>
        <dbReference type="EC" id="3.1.3.11"/>
    </reaction>
</comment>
<comment type="cofactor">
    <cofactor evidence="1">
        <name>Mg(2+)</name>
        <dbReference type="ChEBI" id="CHEBI:18420"/>
    </cofactor>
    <text evidence="1">Binds 2 magnesium ions per subunit.</text>
</comment>
<comment type="pathway">
    <text evidence="1">Carbohydrate biosynthesis; gluconeogenesis.</text>
</comment>
<comment type="subunit">
    <text evidence="1">Homotetramer.</text>
</comment>
<comment type="subcellular location">
    <subcellularLocation>
        <location evidence="1">Cytoplasm</location>
    </subcellularLocation>
</comment>
<comment type="similarity">
    <text evidence="1">Belongs to the FBPase class 1 family.</text>
</comment>
<accession>Q15ZB4</accession>
<name>F16PA_PSEA6</name>
<dbReference type="EC" id="3.1.3.11" evidence="1"/>
<dbReference type="EMBL" id="CP000388">
    <property type="protein sequence ID" value="ABG38774.1"/>
    <property type="molecule type" value="Genomic_DNA"/>
</dbReference>
<dbReference type="RefSeq" id="WP_006992291.1">
    <property type="nucleotide sequence ID" value="NC_008228.1"/>
</dbReference>
<dbReference type="SMR" id="Q15ZB4"/>
<dbReference type="STRING" id="342610.Patl_0242"/>
<dbReference type="KEGG" id="pat:Patl_0242"/>
<dbReference type="eggNOG" id="COG0158">
    <property type="taxonomic scope" value="Bacteria"/>
</dbReference>
<dbReference type="HOGENOM" id="CLU_039977_0_0_6"/>
<dbReference type="OrthoDB" id="9806756at2"/>
<dbReference type="UniPathway" id="UPA00138"/>
<dbReference type="Proteomes" id="UP000001981">
    <property type="component" value="Chromosome"/>
</dbReference>
<dbReference type="GO" id="GO:0005829">
    <property type="term" value="C:cytosol"/>
    <property type="evidence" value="ECO:0007669"/>
    <property type="project" value="TreeGrafter"/>
</dbReference>
<dbReference type="GO" id="GO:0042132">
    <property type="term" value="F:fructose 1,6-bisphosphate 1-phosphatase activity"/>
    <property type="evidence" value="ECO:0007669"/>
    <property type="project" value="UniProtKB-UniRule"/>
</dbReference>
<dbReference type="GO" id="GO:0000287">
    <property type="term" value="F:magnesium ion binding"/>
    <property type="evidence" value="ECO:0007669"/>
    <property type="project" value="UniProtKB-UniRule"/>
</dbReference>
<dbReference type="GO" id="GO:0030388">
    <property type="term" value="P:fructose 1,6-bisphosphate metabolic process"/>
    <property type="evidence" value="ECO:0007669"/>
    <property type="project" value="TreeGrafter"/>
</dbReference>
<dbReference type="GO" id="GO:0006002">
    <property type="term" value="P:fructose 6-phosphate metabolic process"/>
    <property type="evidence" value="ECO:0007669"/>
    <property type="project" value="TreeGrafter"/>
</dbReference>
<dbReference type="GO" id="GO:0006000">
    <property type="term" value="P:fructose metabolic process"/>
    <property type="evidence" value="ECO:0007669"/>
    <property type="project" value="TreeGrafter"/>
</dbReference>
<dbReference type="GO" id="GO:0006094">
    <property type="term" value="P:gluconeogenesis"/>
    <property type="evidence" value="ECO:0007669"/>
    <property type="project" value="UniProtKB-UniRule"/>
</dbReference>
<dbReference type="GO" id="GO:0005986">
    <property type="term" value="P:sucrose biosynthetic process"/>
    <property type="evidence" value="ECO:0007669"/>
    <property type="project" value="TreeGrafter"/>
</dbReference>
<dbReference type="CDD" id="cd00354">
    <property type="entry name" value="FBPase"/>
    <property type="match status" value="1"/>
</dbReference>
<dbReference type="FunFam" id="3.40.190.80:FF:000011">
    <property type="entry name" value="Fructose-1,6-bisphosphatase class 1"/>
    <property type="match status" value="1"/>
</dbReference>
<dbReference type="Gene3D" id="3.40.190.80">
    <property type="match status" value="1"/>
</dbReference>
<dbReference type="Gene3D" id="3.30.540.10">
    <property type="entry name" value="Fructose-1,6-Bisphosphatase, subunit A, domain 1"/>
    <property type="match status" value="1"/>
</dbReference>
<dbReference type="HAMAP" id="MF_01855">
    <property type="entry name" value="FBPase_class1"/>
    <property type="match status" value="1"/>
</dbReference>
<dbReference type="InterPro" id="IPR044015">
    <property type="entry name" value="FBPase_C_dom"/>
</dbReference>
<dbReference type="InterPro" id="IPR000146">
    <property type="entry name" value="FBPase_class-1"/>
</dbReference>
<dbReference type="InterPro" id="IPR033391">
    <property type="entry name" value="FBPase_N"/>
</dbReference>
<dbReference type="InterPro" id="IPR028343">
    <property type="entry name" value="FBPtase"/>
</dbReference>
<dbReference type="InterPro" id="IPR020548">
    <property type="entry name" value="Fructose_bisphosphatase_AS"/>
</dbReference>
<dbReference type="NCBIfam" id="NF006779">
    <property type="entry name" value="PRK09293.1-3"/>
    <property type="match status" value="1"/>
</dbReference>
<dbReference type="NCBIfam" id="NF006780">
    <property type="entry name" value="PRK09293.1-4"/>
    <property type="match status" value="1"/>
</dbReference>
<dbReference type="PANTHER" id="PTHR11556">
    <property type="entry name" value="FRUCTOSE-1,6-BISPHOSPHATASE-RELATED"/>
    <property type="match status" value="1"/>
</dbReference>
<dbReference type="PANTHER" id="PTHR11556:SF35">
    <property type="entry name" value="SEDOHEPTULOSE-1,7-BISPHOSPHATASE, CHLOROPLASTIC"/>
    <property type="match status" value="1"/>
</dbReference>
<dbReference type="Pfam" id="PF00316">
    <property type="entry name" value="FBPase"/>
    <property type="match status" value="1"/>
</dbReference>
<dbReference type="Pfam" id="PF18913">
    <property type="entry name" value="FBPase_C"/>
    <property type="match status" value="1"/>
</dbReference>
<dbReference type="PIRSF" id="PIRSF500210">
    <property type="entry name" value="FBPtase"/>
    <property type="match status" value="1"/>
</dbReference>
<dbReference type="PIRSF" id="PIRSF000904">
    <property type="entry name" value="FBPtase_SBPase"/>
    <property type="match status" value="1"/>
</dbReference>
<dbReference type="PRINTS" id="PR00115">
    <property type="entry name" value="F16BPHPHTASE"/>
</dbReference>
<dbReference type="SUPFAM" id="SSF56655">
    <property type="entry name" value="Carbohydrate phosphatase"/>
    <property type="match status" value="1"/>
</dbReference>
<dbReference type="PROSITE" id="PS00124">
    <property type="entry name" value="FBPASE"/>
    <property type="match status" value="1"/>
</dbReference>
<proteinExistence type="inferred from homology"/>
<sequence length="323" mass="35382">MKRLNSQLQEDGAPMELILLLRTLLAGCKEISFRVSQGALAGVLGSTLSENVQGETQKKLDVISNQILKDILSESGYVKAISSEEEDDVVACNPNGNYLVSFDPLDGSSNTDINSLIGTIFSITHAPQWMDADDPSAFLQPGTQIVAAGYVLYGPSAMLALSTGRGTHLYTLDKTHGGFLLTQKNIQVPAQTSEFAINASNQRHWEDPVQNYIGDLIAGEDGPREKDFNMRWVAAMVGDIHRVLSRGGIFMYPFDRRNPEMPGKLRLLYEANPMAFLMEQAGGLASTGQGRILEVMPTEIHQRVPVILGSKEEVETCLSYYKA</sequence>
<gene>
    <name evidence="1" type="primary">fbp</name>
    <name type="ordered locus">Patl_0242</name>
</gene>
<reference key="1">
    <citation type="submission" date="2006-06" db="EMBL/GenBank/DDBJ databases">
        <title>Complete sequence of Pseudoalteromonas atlantica T6c.</title>
        <authorList>
            <consortium name="US DOE Joint Genome Institute"/>
            <person name="Copeland A."/>
            <person name="Lucas S."/>
            <person name="Lapidus A."/>
            <person name="Barry K."/>
            <person name="Detter J.C."/>
            <person name="Glavina del Rio T."/>
            <person name="Hammon N."/>
            <person name="Israni S."/>
            <person name="Dalin E."/>
            <person name="Tice H."/>
            <person name="Pitluck S."/>
            <person name="Saunders E."/>
            <person name="Brettin T."/>
            <person name="Bruce D."/>
            <person name="Han C."/>
            <person name="Tapia R."/>
            <person name="Gilna P."/>
            <person name="Schmutz J."/>
            <person name="Larimer F."/>
            <person name="Land M."/>
            <person name="Hauser L."/>
            <person name="Kyrpides N."/>
            <person name="Kim E."/>
            <person name="Karls A.C."/>
            <person name="Bartlett D."/>
            <person name="Higgins B.P."/>
            <person name="Richardson P."/>
        </authorList>
    </citation>
    <scope>NUCLEOTIDE SEQUENCE [LARGE SCALE GENOMIC DNA]</scope>
    <source>
        <strain>T6c / ATCC BAA-1087</strain>
    </source>
</reference>
<feature type="chain" id="PRO_0000364636" description="Fructose-1,6-bisphosphatase class 1">
    <location>
        <begin position="1"/>
        <end position="323"/>
    </location>
</feature>
<feature type="binding site" evidence="1">
    <location>
        <position position="84"/>
    </location>
    <ligand>
        <name>Mg(2+)</name>
        <dbReference type="ChEBI" id="CHEBI:18420"/>
        <label>1</label>
    </ligand>
</feature>
<feature type="binding site" evidence="1">
    <location>
        <position position="103"/>
    </location>
    <ligand>
        <name>Mg(2+)</name>
        <dbReference type="ChEBI" id="CHEBI:18420"/>
        <label>1</label>
    </ligand>
</feature>
<feature type="binding site" evidence="1">
    <location>
        <position position="103"/>
    </location>
    <ligand>
        <name>Mg(2+)</name>
        <dbReference type="ChEBI" id="CHEBI:18420"/>
        <label>2</label>
    </ligand>
</feature>
<feature type="binding site" evidence="1">
    <location>
        <position position="105"/>
    </location>
    <ligand>
        <name>Mg(2+)</name>
        <dbReference type="ChEBI" id="CHEBI:18420"/>
        <label>1</label>
    </ligand>
</feature>
<feature type="binding site" evidence="1">
    <location>
        <begin position="106"/>
        <end position="109"/>
    </location>
    <ligand>
        <name>substrate</name>
    </ligand>
</feature>
<feature type="binding site" evidence="1">
    <location>
        <position position="106"/>
    </location>
    <ligand>
        <name>Mg(2+)</name>
        <dbReference type="ChEBI" id="CHEBI:18420"/>
        <label>2</label>
    </ligand>
</feature>
<feature type="binding site" evidence="1">
    <location>
        <position position="198"/>
    </location>
    <ligand>
        <name>substrate</name>
    </ligand>
</feature>
<feature type="binding site" evidence="1">
    <location>
        <position position="264"/>
    </location>
    <ligand>
        <name>substrate</name>
    </ligand>
</feature>
<feature type="binding site" evidence="1">
    <location>
        <position position="270"/>
    </location>
    <ligand>
        <name>Mg(2+)</name>
        <dbReference type="ChEBI" id="CHEBI:18420"/>
        <label>2</label>
    </ligand>
</feature>
<organism>
    <name type="scientific">Pseudoalteromonas atlantica (strain T6c / ATCC BAA-1087)</name>
    <dbReference type="NCBI Taxonomy" id="3042615"/>
    <lineage>
        <taxon>Bacteria</taxon>
        <taxon>Pseudomonadati</taxon>
        <taxon>Pseudomonadota</taxon>
        <taxon>Gammaproteobacteria</taxon>
        <taxon>Alteromonadales</taxon>
        <taxon>Alteromonadaceae</taxon>
        <taxon>Paraglaciecola</taxon>
    </lineage>
</organism>
<protein>
    <recommendedName>
        <fullName evidence="1">Fructose-1,6-bisphosphatase class 1</fullName>
        <shortName evidence="1">FBPase class 1</shortName>
        <ecNumber evidence="1">3.1.3.11</ecNumber>
    </recommendedName>
    <alternativeName>
        <fullName evidence="1">D-fructose-1,6-bisphosphate 1-phosphohydrolase class 1</fullName>
    </alternativeName>
</protein>
<evidence type="ECO:0000255" key="1">
    <source>
        <dbReference type="HAMAP-Rule" id="MF_01855"/>
    </source>
</evidence>
<keyword id="KW-0119">Carbohydrate metabolism</keyword>
<keyword id="KW-0963">Cytoplasm</keyword>
<keyword id="KW-0378">Hydrolase</keyword>
<keyword id="KW-0460">Magnesium</keyword>
<keyword id="KW-0479">Metal-binding</keyword>